<name>GATA_BACCN</name>
<reference key="1">
    <citation type="journal article" date="2008" name="Chem. Biol. Interact.">
        <title>Extending the Bacillus cereus group genomics to putative food-borne pathogens of different toxicity.</title>
        <authorList>
            <person name="Lapidus A."/>
            <person name="Goltsman E."/>
            <person name="Auger S."/>
            <person name="Galleron N."/>
            <person name="Segurens B."/>
            <person name="Dossat C."/>
            <person name="Land M.L."/>
            <person name="Broussolle V."/>
            <person name="Brillard J."/>
            <person name="Guinebretiere M.-H."/>
            <person name="Sanchis V."/>
            <person name="Nguen-the C."/>
            <person name="Lereclus D."/>
            <person name="Richardson P."/>
            <person name="Wincker P."/>
            <person name="Weissenbach J."/>
            <person name="Ehrlich S.D."/>
            <person name="Sorokin A."/>
        </authorList>
    </citation>
    <scope>NUCLEOTIDE SEQUENCE [LARGE SCALE GENOMIC DNA]</scope>
    <source>
        <strain>DSM 22905 / CIP 110041 / 391-98 / NVH 391-98</strain>
    </source>
</reference>
<evidence type="ECO:0000255" key="1">
    <source>
        <dbReference type="HAMAP-Rule" id="MF_00120"/>
    </source>
</evidence>
<protein>
    <recommendedName>
        <fullName evidence="1">Glutamyl-tRNA(Gln) amidotransferase subunit A</fullName>
        <shortName evidence="1">Glu-ADT subunit A</shortName>
        <ecNumber evidence="1">6.3.5.7</ecNumber>
    </recommendedName>
</protein>
<proteinExistence type="inferred from homology"/>
<keyword id="KW-0067">ATP-binding</keyword>
<keyword id="KW-0436">Ligase</keyword>
<keyword id="KW-0547">Nucleotide-binding</keyword>
<keyword id="KW-0648">Protein biosynthesis</keyword>
<gene>
    <name evidence="1" type="primary">gatA</name>
    <name type="ordered locus">Bcer98_0298</name>
</gene>
<sequence length="485" mass="52440">MSLFDHSVSELHKKLNNKEISVTDLVEESYKRIADVEDNVKAFLTLNEENARAKAKELDAKIGAEDNGLLFGMPIGVKDNIVTKGLRTTCASKMLANFDPIYDATVVQKLNEADTITIGKLNMDEFAMGSSNENSGFYATKNPWNLEYVPGGSSGGSAAAVAAGEVLFSLGSDTGGSIRQPAAYCGVVGLKPTYGRVSRYGLVAFASSLDQIGPITRTVEDNAYLLQAISGVDRMDATSANIEVGNYLAGLTGDVKGLRIAVPKEYLGEGVGEEARESVLAALKVLEGMGATWEEVSLPHSKYALATYYLISSSEASSNLSRFDGVRYGVRSDNVNNLMDLYKNTRSEGFGDEVKRRIMLGTFALSSGYYDAYYKKAQQVRTLIKNDFENVFANYDVIIGPTTPTPAFKVGEKIDDPMTMYANDILTIPVNLAGVPAISVPCGFGANNMPLGLQIIGKHFDEATIYRVAHAFEQATDYHTKKASL</sequence>
<organism>
    <name type="scientific">Bacillus cytotoxicus (strain DSM 22905 / CIP 110041 / 391-98 / NVH 391-98)</name>
    <dbReference type="NCBI Taxonomy" id="315749"/>
    <lineage>
        <taxon>Bacteria</taxon>
        <taxon>Bacillati</taxon>
        <taxon>Bacillota</taxon>
        <taxon>Bacilli</taxon>
        <taxon>Bacillales</taxon>
        <taxon>Bacillaceae</taxon>
        <taxon>Bacillus</taxon>
        <taxon>Bacillus cereus group</taxon>
    </lineage>
</organism>
<dbReference type="EC" id="6.3.5.7" evidence="1"/>
<dbReference type="EMBL" id="CP000764">
    <property type="protein sequence ID" value="ABS20661.1"/>
    <property type="molecule type" value="Genomic_DNA"/>
</dbReference>
<dbReference type="RefSeq" id="WP_011983419.1">
    <property type="nucleotide sequence ID" value="NC_009674.1"/>
</dbReference>
<dbReference type="SMR" id="A7GKK3"/>
<dbReference type="STRING" id="315749.Bcer98_0298"/>
<dbReference type="GeneID" id="33895652"/>
<dbReference type="KEGG" id="bcy:Bcer98_0298"/>
<dbReference type="eggNOG" id="COG0154">
    <property type="taxonomic scope" value="Bacteria"/>
</dbReference>
<dbReference type="HOGENOM" id="CLU_009600_0_3_9"/>
<dbReference type="OrthoDB" id="9811471at2"/>
<dbReference type="Proteomes" id="UP000002300">
    <property type="component" value="Chromosome"/>
</dbReference>
<dbReference type="GO" id="GO:0030956">
    <property type="term" value="C:glutamyl-tRNA(Gln) amidotransferase complex"/>
    <property type="evidence" value="ECO:0007669"/>
    <property type="project" value="InterPro"/>
</dbReference>
<dbReference type="GO" id="GO:0005524">
    <property type="term" value="F:ATP binding"/>
    <property type="evidence" value="ECO:0007669"/>
    <property type="project" value="UniProtKB-KW"/>
</dbReference>
<dbReference type="GO" id="GO:0050567">
    <property type="term" value="F:glutaminyl-tRNA synthase (glutamine-hydrolyzing) activity"/>
    <property type="evidence" value="ECO:0007669"/>
    <property type="project" value="UniProtKB-UniRule"/>
</dbReference>
<dbReference type="GO" id="GO:0006412">
    <property type="term" value="P:translation"/>
    <property type="evidence" value="ECO:0007669"/>
    <property type="project" value="UniProtKB-UniRule"/>
</dbReference>
<dbReference type="Gene3D" id="3.90.1300.10">
    <property type="entry name" value="Amidase signature (AS) domain"/>
    <property type="match status" value="1"/>
</dbReference>
<dbReference type="HAMAP" id="MF_00120">
    <property type="entry name" value="GatA"/>
    <property type="match status" value="1"/>
</dbReference>
<dbReference type="InterPro" id="IPR000120">
    <property type="entry name" value="Amidase"/>
</dbReference>
<dbReference type="InterPro" id="IPR020556">
    <property type="entry name" value="Amidase_CS"/>
</dbReference>
<dbReference type="InterPro" id="IPR023631">
    <property type="entry name" value="Amidase_dom"/>
</dbReference>
<dbReference type="InterPro" id="IPR036928">
    <property type="entry name" value="AS_sf"/>
</dbReference>
<dbReference type="InterPro" id="IPR004412">
    <property type="entry name" value="GatA"/>
</dbReference>
<dbReference type="NCBIfam" id="TIGR00132">
    <property type="entry name" value="gatA"/>
    <property type="match status" value="1"/>
</dbReference>
<dbReference type="PANTHER" id="PTHR11895:SF151">
    <property type="entry name" value="GLUTAMYL-TRNA(GLN) AMIDOTRANSFERASE SUBUNIT A"/>
    <property type="match status" value="1"/>
</dbReference>
<dbReference type="PANTHER" id="PTHR11895">
    <property type="entry name" value="TRANSAMIDASE"/>
    <property type="match status" value="1"/>
</dbReference>
<dbReference type="Pfam" id="PF01425">
    <property type="entry name" value="Amidase"/>
    <property type="match status" value="1"/>
</dbReference>
<dbReference type="SUPFAM" id="SSF75304">
    <property type="entry name" value="Amidase signature (AS) enzymes"/>
    <property type="match status" value="1"/>
</dbReference>
<dbReference type="PROSITE" id="PS00571">
    <property type="entry name" value="AMIDASES"/>
    <property type="match status" value="1"/>
</dbReference>
<accession>A7GKK3</accession>
<feature type="chain" id="PRO_1000076120" description="Glutamyl-tRNA(Gln) amidotransferase subunit A">
    <location>
        <begin position="1"/>
        <end position="485"/>
    </location>
</feature>
<feature type="active site" description="Charge relay system" evidence="1">
    <location>
        <position position="78"/>
    </location>
</feature>
<feature type="active site" description="Charge relay system" evidence="1">
    <location>
        <position position="153"/>
    </location>
</feature>
<feature type="active site" description="Acyl-ester intermediate" evidence="1">
    <location>
        <position position="177"/>
    </location>
</feature>
<comment type="function">
    <text evidence="1">Allows the formation of correctly charged Gln-tRNA(Gln) through the transamidation of misacylated Glu-tRNA(Gln) in organisms which lack glutaminyl-tRNA synthetase. The reaction takes place in the presence of glutamine and ATP through an activated gamma-phospho-Glu-tRNA(Gln).</text>
</comment>
<comment type="catalytic activity">
    <reaction evidence="1">
        <text>L-glutamyl-tRNA(Gln) + L-glutamine + ATP + H2O = L-glutaminyl-tRNA(Gln) + L-glutamate + ADP + phosphate + H(+)</text>
        <dbReference type="Rhea" id="RHEA:17521"/>
        <dbReference type="Rhea" id="RHEA-COMP:9681"/>
        <dbReference type="Rhea" id="RHEA-COMP:9684"/>
        <dbReference type="ChEBI" id="CHEBI:15377"/>
        <dbReference type="ChEBI" id="CHEBI:15378"/>
        <dbReference type="ChEBI" id="CHEBI:29985"/>
        <dbReference type="ChEBI" id="CHEBI:30616"/>
        <dbReference type="ChEBI" id="CHEBI:43474"/>
        <dbReference type="ChEBI" id="CHEBI:58359"/>
        <dbReference type="ChEBI" id="CHEBI:78520"/>
        <dbReference type="ChEBI" id="CHEBI:78521"/>
        <dbReference type="ChEBI" id="CHEBI:456216"/>
        <dbReference type="EC" id="6.3.5.7"/>
    </reaction>
</comment>
<comment type="subunit">
    <text evidence="1">Heterotrimer of A, B and C subunits.</text>
</comment>
<comment type="similarity">
    <text evidence="1">Belongs to the amidase family. GatA subfamily.</text>
</comment>